<organism>
    <name type="scientific">Mus musculus</name>
    <name type="common">Mouse</name>
    <dbReference type="NCBI Taxonomy" id="10090"/>
    <lineage>
        <taxon>Eukaryota</taxon>
        <taxon>Metazoa</taxon>
        <taxon>Chordata</taxon>
        <taxon>Craniata</taxon>
        <taxon>Vertebrata</taxon>
        <taxon>Euteleostomi</taxon>
        <taxon>Mammalia</taxon>
        <taxon>Eutheria</taxon>
        <taxon>Euarchontoglires</taxon>
        <taxon>Glires</taxon>
        <taxon>Rodentia</taxon>
        <taxon>Myomorpha</taxon>
        <taxon>Muroidea</taxon>
        <taxon>Muridae</taxon>
        <taxon>Murinae</taxon>
        <taxon>Mus</taxon>
        <taxon>Mus</taxon>
    </lineage>
</organism>
<sequence length="599" mass="65170">MDEQVFKGDPDTPHSISFSGSGFLSYYQAGAVDALRDLAPRMLDTAHRFAGTSAGAVIAALVVCGIEMEKYLRVLNMGLAEVKKFFLGPLSPSCKMVQMMRQFLYDVLPEDSYKFATGKLHVSLTRVTDGENVVVSEYRSKEELIEALYCSCFVPVYCGFIPPTYRGERYIDGGFTSMQPCSFWTDSITISTFSSQQDICPRDCPTIFHDFRMFNFSFQFSLENITRMTHALFPPDLVILQEYYYRGYNDAVSYLRRLNAAYLDSPSKRVIFPRVEVYCQIEVALGHEPPPPSLQNLPALRRSPADSSQTHAQGSPKKDRKDSHSSAAPSVQTPESGCKESVESPVSLRVSISKQPSVSPLSPAQPVPVMRPTGPRDSCPINVQTPNPERGVKGALDSATERGMKDALASATDEQSTTTLPPVLLPAADSRGSKTGSSVPIGSPESPRLLLRSSQGATASRATLGLPPLSPSTPPAGPPVEDLGPERPTATGSPALSQLTGSAAPGTGKKAPHKPLLVEGPGEDSNTAKTMFKRKQKTNATRECFHRNAQSKKPASKLKSAPCPLNFPVLPKRVWVTYKPHPSRIQDYSYPEGVSGQNS</sequence>
<keyword id="KW-0963">Cytoplasm</keyword>
<keyword id="KW-0444">Lipid biosynthesis</keyword>
<keyword id="KW-0443">Lipid metabolism</keyword>
<keyword id="KW-1185">Reference proteome</keyword>
<keyword id="KW-0808">Transferase</keyword>
<comment type="function">
    <text evidence="4 5">Omega-hydroxyceramide transacylase involved in the synthesis of omega-O-acylceramides (esterified omega-hydroxyacyl-sphingosine; EOS), which are extremely hydrophobic lipids involved in skin barrier formation (PubMed:27751867, PubMed:28248300). Catalyzes the last step of the synthesis of omega-O-acylceramides by transferring linoleic acid from triglycerides to an omega-hydroxyceramide (PubMed:27751867, PubMed:28248300). Omega-O-acylceramides, are required for the biogenesis of lipid lamellae in the stratum corneum and the formation of the cornified lipid envelope which are essential for the epidermis barrier function (PubMed:27751867, PubMed:28248300). These lipids also play a role in keratinocyte differentiation (PubMed:28248300). May also act on omega-hydroxylated ultra-long chain fatty acids (omega-OH ULCFA) and acylglucosylceramides (GlcEOS) (PubMed:28248300).</text>
</comment>
<comment type="catalytic activity">
    <reaction evidence="6 7">
        <text>an N-(omega-hydroxy-ultra-long chain fatty acyl)-sphingoid base + a (9Z,12Z)-octadecadienoyl-containing triacyl-sn-glycerol = an N-[omega-(9Z,12Z-octadecadienoyloxy)-O-ultra-long chain fatty acyl]-sphingoid base + a diacylglycerol</text>
        <dbReference type="Rhea" id="RHEA:61528"/>
        <dbReference type="ChEBI" id="CHEBI:18035"/>
        <dbReference type="ChEBI" id="CHEBI:144774"/>
        <dbReference type="ChEBI" id="CHEBI:144784"/>
        <dbReference type="ChEBI" id="CHEBI:144785"/>
        <dbReference type="EC" id="2.3.1.296"/>
    </reaction>
    <physiologicalReaction direction="left-to-right" evidence="6 7">
        <dbReference type="Rhea" id="RHEA:61529"/>
    </physiologicalReaction>
</comment>
<comment type="catalytic activity">
    <reaction evidence="6 7">
        <text>an N-(omega-hydroxy-ultra-long chain fatty acyl)-sphing-4-enine + a (9Z,12Z)-octadecadienoyl-containing triacyl-sn-glycerol = an N-(omega-(9Z,12Z-octadecadienoyloxy)-ultra-long chain fatty acyl)-sphing-4-enine + a diacylglycerol</text>
        <dbReference type="Rhea" id="RHEA:65692"/>
        <dbReference type="ChEBI" id="CHEBI:18035"/>
        <dbReference type="ChEBI" id="CHEBI:144774"/>
        <dbReference type="ChEBI" id="CHEBI:157662"/>
        <dbReference type="ChEBI" id="CHEBI:157663"/>
    </reaction>
    <physiologicalReaction direction="left-to-right" evidence="6 7">
        <dbReference type="Rhea" id="RHEA:65693"/>
    </physiologicalReaction>
</comment>
<comment type="catalytic activity">
    <reaction evidence="7">
        <text>N-(28-hydroxyoctacosanoyl)-sphing-4-enine + a (9Z,12Z)-octadecadienoyl-containing triacyl-sn-glycerol = N-(28-(9Z,12Z-octadecadienoyloxy)-octacosanoyl)-sphing-4-enine + a diacylglycerol</text>
        <dbReference type="Rhea" id="RHEA:65648"/>
        <dbReference type="ChEBI" id="CHEBI:18035"/>
        <dbReference type="ChEBI" id="CHEBI:144774"/>
        <dbReference type="ChEBI" id="CHEBI:157643"/>
        <dbReference type="ChEBI" id="CHEBI:157652"/>
    </reaction>
    <physiologicalReaction direction="left-to-right" evidence="7">
        <dbReference type="Rhea" id="RHEA:65649"/>
    </physiologicalReaction>
</comment>
<comment type="catalytic activity">
    <reaction evidence="7">
        <text>N-(30-hydroxytriacontanoyl)-sphing-4-enine + 1,2,3-tri-(9Z,12Z)-octadecadienoylglycerol = N-[30-(9Z,12Z-octadecadienoyloxy)-triacontanoyl]-sphing-4-enine + di-(9Z,12Z)-octadecadienoylglycerol</text>
        <dbReference type="Rhea" id="RHEA:55264"/>
        <dbReference type="ChEBI" id="CHEBI:34862"/>
        <dbReference type="ChEBI" id="CHEBI:75844"/>
        <dbReference type="ChEBI" id="CHEBI:138658"/>
        <dbReference type="ChEBI" id="CHEBI:138664"/>
    </reaction>
    <physiologicalReaction direction="left-to-right" evidence="7">
        <dbReference type="Rhea" id="RHEA:55265"/>
    </physiologicalReaction>
</comment>
<comment type="catalytic activity">
    <reaction evidence="7">
        <text>N-(32-hydroxydotriacontanoyl)-sphing-4-enine + a (9Z,12Z)-octadecadienoyl-containing triacyl-sn-glycerol = N-(32-(9Z,12Z-octadecadienoyloxy)-dotricontanoyl)-sphing-4-enine + a diacylglycerol</text>
        <dbReference type="Rhea" id="RHEA:65652"/>
        <dbReference type="ChEBI" id="CHEBI:18035"/>
        <dbReference type="ChEBI" id="CHEBI:144774"/>
        <dbReference type="ChEBI" id="CHEBI:157644"/>
        <dbReference type="ChEBI" id="CHEBI:157653"/>
    </reaction>
    <physiologicalReaction direction="left-to-right" evidence="7">
        <dbReference type="Rhea" id="RHEA:65653"/>
    </physiologicalReaction>
</comment>
<comment type="catalytic activity">
    <reaction evidence="7">
        <text>N-(32-hydroxydotriacontenoyl)-sphing-4-enine + a (9Z,12Z)-octadecadienoyl-containing triacyl-sn-glycerol = an N-(32-(9Z,12Z-octadecadienoyloxy)-dotriacontenoyl)-sphing-4-enine + a diacylglycerol</text>
        <dbReference type="Rhea" id="RHEA:65668"/>
        <dbReference type="ChEBI" id="CHEBI:18035"/>
        <dbReference type="ChEBI" id="CHEBI:144774"/>
        <dbReference type="ChEBI" id="CHEBI:157645"/>
        <dbReference type="ChEBI" id="CHEBI:157657"/>
    </reaction>
    <physiologicalReaction direction="left-to-right" evidence="7">
        <dbReference type="Rhea" id="RHEA:65669"/>
    </physiologicalReaction>
</comment>
<comment type="catalytic activity">
    <reaction evidence="7">
        <text>an N-(34-hydroxytetratriacontenoyl)-sphing-4-enine + a (9Z,12Z)-octadecadienoyl-containing triacyl-sn-glycerol = an N-(34-(9Z,12Z-octadecadienoyloxy)-tetratriacontenoyl)-sphing-4-enine + a diacylglycerol</text>
        <dbReference type="Rhea" id="RHEA:65672"/>
        <dbReference type="ChEBI" id="CHEBI:18035"/>
        <dbReference type="ChEBI" id="CHEBI:144774"/>
        <dbReference type="ChEBI" id="CHEBI:157646"/>
        <dbReference type="ChEBI" id="CHEBI:157656"/>
    </reaction>
    <physiologicalReaction direction="left-to-right" evidence="7">
        <dbReference type="Rhea" id="RHEA:65673"/>
    </physiologicalReaction>
</comment>
<comment type="catalytic activity">
    <reaction evidence="7">
        <text>an N-(34-hydroxytetratriacontadienoyl)-sphing-4-enine + a (9Z,12Z)-octadecadienoyl-containing triacyl-sn-glycerol = an N-(34-(9Z,12Z-octadecadienoyloxy)-tetratriacontadienoyl)-sphing-4-enine + a diacylglycerol</text>
        <dbReference type="Rhea" id="RHEA:65676"/>
        <dbReference type="ChEBI" id="CHEBI:18035"/>
        <dbReference type="ChEBI" id="CHEBI:144774"/>
        <dbReference type="ChEBI" id="CHEBI:157647"/>
        <dbReference type="ChEBI" id="CHEBI:157658"/>
    </reaction>
    <physiologicalReaction direction="left-to-right" evidence="7">
        <dbReference type="Rhea" id="RHEA:65677"/>
    </physiologicalReaction>
</comment>
<comment type="catalytic activity">
    <reaction evidence="7">
        <text>an N-(36-hydroxyhexatriacontenoyl)-sphing-4-enine + a (9Z,12Z)-octadecadienoyl-containing triacyl-sn-glycerol = an N-(36-(9Z,12Z-octadecadienoyloxy)-hexatriacontenoyl)-sphing-4-enine + a diacylglycerol</text>
        <dbReference type="Rhea" id="RHEA:65680"/>
        <dbReference type="ChEBI" id="CHEBI:18035"/>
        <dbReference type="ChEBI" id="CHEBI:144774"/>
        <dbReference type="ChEBI" id="CHEBI:157648"/>
        <dbReference type="ChEBI" id="CHEBI:157659"/>
    </reaction>
    <physiologicalReaction direction="left-to-right" evidence="7">
        <dbReference type="Rhea" id="RHEA:65681"/>
    </physiologicalReaction>
</comment>
<comment type="catalytic activity">
    <reaction evidence="7">
        <text>an N-(36-hydroxyhexatriacontadienoyl)-sphing-4-enine + a (9Z,12Z)-octadecadienoyl-containing triacyl-sn-glycerol = an N-(36-(9Z,12Z-octadecadienoyloxy)-hexatriacontadienoyl)-sphing-4-enine + a diacylglycerol</text>
        <dbReference type="Rhea" id="RHEA:65684"/>
        <dbReference type="ChEBI" id="CHEBI:18035"/>
        <dbReference type="ChEBI" id="CHEBI:144774"/>
        <dbReference type="ChEBI" id="CHEBI:157649"/>
        <dbReference type="ChEBI" id="CHEBI:157660"/>
    </reaction>
    <physiologicalReaction direction="left-to-right" evidence="7">
        <dbReference type="Rhea" id="RHEA:65685"/>
    </physiologicalReaction>
</comment>
<comment type="catalytic activity">
    <reaction evidence="7">
        <text>an N-(38-hydroxyoctatriacontenoyl)-sphing-4-enine + a (9Z,12Z)-octadecadienoyl-containing triacyl-sn-glycerol = an N-(38-(9Z,12Z-octadecadienoyloxy)-octatriacontenoyl)-sphing-4-enine + a diacylglycerol</text>
        <dbReference type="Rhea" id="RHEA:65688"/>
        <dbReference type="ChEBI" id="CHEBI:18035"/>
        <dbReference type="ChEBI" id="CHEBI:144774"/>
        <dbReference type="ChEBI" id="CHEBI:157650"/>
        <dbReference type="ChEBI" id="CHEBI:157661"/>
    </reaction>
    <physiologicalReaction direction="left-to-right" evidence="7">
        <dbReference type="Rhea" id="RHEA:65689"/>
    </physiologicalReaction>
</comment>
<comment type="subcellular location">
    <subcellularLocation>
        <location evidence="1">Cytoplasm</location>
    </subcellularLocation>
</comment>
<comment type="tissue specificity">
    <text evidence="4 5">Specifically expressed in skin by keratinocytes, at the boundary area between the nucleated stratum granulosum and the denucleated stratum corneum in the epidermis (at protein level) (PubMed:28248300). Also expressed in stomach and other surface lining tissues like intestine and tongue (PubMed:27751867, PubMed:28248300). Also detected in testis as well as in other tissues but at very low level (PubMed:28248300).</text>
</comment>
<comment type="induction">
    <text evidence="5">Up-regulated upon induced differentiation of keratinocytes.</text>
</comment>
<comment type="disruption phenotype">
    <text evidence="4 5">Homozygous knockout mice lacking Pnpla1 are obtained at the expected Mendelian ratio but die within 24 hours after birth (PubMed:27751867, PubMed:28248300). They display shiny and taut skin, often with a necrotic tail tip (PubMed:27751867, PubMed:28248300). They are less active, markedly smaller, and weighed significantly less than their wild-type counterpart (PubMed:27751867). Unique linoleate-containing lipids including acylceramides, acylglucosylceramides and (O-acyl)-omega-hydroxy fatty acids are almost absent in the epidermis while there is a reciprocal increase in their putative precursors (PubMed:27751867, PubMed:28248300). The absence of these highly hydrophobic linoleate-containing lipids in the epidermis is responsible for the lethal disruption of the epidermal permeability barrier which is characterized by a decrease in intercellular lipid lamellae in the stratum corneum, the loss or abnormalities of the cornified lipid envelope, and aberrant keratinocyte differentiation (PubMed:27751867, PubMed:28248300). Keratinocyte-specific conditional knockout mice also die shortly after birth, displaying desquamation with alteration of the stratum corneum and of the lipid composition of the epidermis (PubMed:28248300).</text>
</comment>
<gene>
    <name evidence="8" type="primary">Pnpla1</name>
</gene>
<dbReference type="EC" id="2.3.1.296" evidence="6 7"/>
<dbReference type="EMBL" id="AK132521">
    <property type="protein sequence ID" value="BAE21216.1"/>
    <property type="molecule type" value="mRNA"/>
</dbReference>
<dbReference type="CCDS" id="CCDS37533.1"/>
<dbReference type="RefSeq" id="NP_001030057.1">
    <property type="nucleotide sequence ID" value="NM_001034885.3"/>
</dbReference>
<dbReference type="SMR" id="Q3V1D5"/>
<dbReference type="FunCoup" id="Q3V1D5">
    <property type="interactions" value="34"/>
</dbReference>
<dbReference type="STRING" id="10090.ENSMUSP00000050123"/>
<dbReference type="GlyGen" id="Q3V1D5">
    <property type="glycosylation" value="3 sites, 3 N-linked glycans (3 sites)"/>
</dbReference>
<dbReference type="iPTMnet" id="Q3V1D5"/>
<dbReference type="PhosphoSitePlus" id="Q3V1D5"/>
<dbReference type="jPOST" id="Q3V1D5"/>
<dbReference type="PaxDb" id="10090-ENSMUSP00000050123"/>
<dbReference type="ProteomicsDB" id="288256"/>
<dbReference type="Antibodypedia" id="29651">
    <property type="antibodies" value="122 antibodies from 16 providers"/>
</dbReference>
<dbReference type="Ensembl" id="ENSMUST00000056866.8">
    <property type="protein sequence ID" value="ENSMUSP00000050123.6"/>
    <property type="gene ID" value="ENSMUSG00000043286.13"/>
</dbReference>
<dbReference type="GeneID" id="433091"/>
<dbReference type="KEGG" id="mmu:433091"/>
<dbReference type="UCSC" id="uc008brt.1">
    <property type="organism name" value="mouse"/>
</dbReference>
<dbReference type="AGR" id="MGI:3617850"/>
<dbReference type="CTD" id="285848"/>
<dbReference type="MGI" id="MGI:3617850">
    <property type="gene designation" value="Pnpla1"/>
</dbReference>
<dbReference type="VEuPathDB" id="HostDB:ENSMUSG00000043286"/>
<dbReference type="eggNOG" id="KOG3773">
    <property type="taxonomic scope" value="Eukaryota"/>
</dbReference>
<dbReference type="GeneTree" id="ENSGT00940000160828"/>
<dbReference type="HOGENOM" id="CLU_039943_0_0_1"/>
<dbReference type="InParanoid" id="Q3V1D5"/>
<dbReference type="OMA" id="SSQQDIC"/>
<dbReference type="OrthoDB" id="197155at2759"/>
<dbReference type="PhylomeDB" id="Q3V1D5"/>
<dbReference type="TreeFam" id="TF314272"/>
<dbReference type="BioGRID-ORCS" id="433091">
    <property type="hits" value="3 hits in 79 CRISPR screens"/>
</dbReference>
<dbReference type="PRO" id="PR:Q3V1D5"/>
<dbReference type="Proteomes" id="UP000000589">
    <property type="component" value="Chromosome 17"/>
</dbReference>
<dbReference type="RNAct" id="Q3V1D5">
    <property type="molecule type" value="protein"/>
</dbReference>
<dbReference type="Bgee" id="ENSMUSG00000043286">
    <property type="expression patterns" value="Expressed in tail skin and 41 other cell types or tissues"/>
</dbReference>
<dbReference type="ExpressionAtlas" id="Q3V1D5">
    <property type="expression patterns" value="baseline and differential"/>
</dbReference>
<dbReference type="GO" id="GO:0005737">
    <property type="term" value="C:cytoplasm"/>
    <property type="evidence" value="ECO:0000250"/>
    <property type="project" value="UniProtKB"/>
</dbReference>
<dbReference type="GO" id="GO:0016020">
    <property type="term" value="C:membrane"/>
    <property type="evidence" value="ECO:0007669"/>
    <property type="project" value="GOC"/>
</dbReference>
<dbReference type="GO" id="GO:0016747">
    <property type="term" value="F:acyltransferase activity, transferring groups other than amino-acyl groups"/>
    <property type="evidence" value="ECO:0000315"/>
    <property type="project" value="UniProtKB"/>
</dbReference>
<dbReference type="GO" id="GO:0016787">
    <property type="term" value="F:hydrolase activity"/>
    <property type="evidence" value="ECO:0007669"/>
    <property type="project" value="InterPro"/>
</dbReference>
<dbReference type="GO" id="GO:0106341">
    <property type="term" value="F:omega-hydroxyceramide transacylase activity"/>
    <property type="evidence" value="ECO:0000315"/>
    <property type="project" value="UniProtKB"/>
</dbReference>
<dbReference type="GO" id="GO:0030280">
    <property type="term" value="F:structural constituent of skin epidermis"/>
    <property type="evidence" value="ECO:0000315"/>
    <property type="project" value="UniProtKB"/>
</dbReference>
<dbReference type="GO" id="GO:0046513">
    <property type="term" value="P:ceramide biosynthetic process"/>
    <property type="evidence" value="ECO:0000315"/>
    <property type="project" value="UniProtKB"/>
</dbReference>
<dbReference type="GO" id="GO:0061436">
    <property type="term" value="P:establishment of skin barrier"/>
    <property type="evidence" value="ECO:0000315"/>
    <property type="project" value="UniProtKB"/>
</dbReference>
<dbReference type="GO" id="GO:0030216">
    <property type="term" value="P:keratinocyte differentiation"/>
    <property type="evidence" value="ECO:0000315"/>
    <property type="project" value="UniProtKB"/>
</dbReference>
<dbReference type="GO" id="GO:0016042">
    <property type="term" value="P:lipid catabolic process"/>
    <property type="evidence" value="ECO:0007669"/>
    <property type="project" value="InterPro"/>
</dbReference>
<dbReference type="GO" id="GO:0106342">
    <property type="term" value="P:omega-hydroxyceramide biosynthetic process"/>
    <property type="evidence" value="ECO:0000315"/>
    <property type="project" value="UniProtKB"/>
</dbReference>
<dbReference type="FunFam" id="3.40.1090.10:FF:000014">
    <property type="entry name" value="Patatin like phospholipase domain containing 1"/>
    <property type="match status" value="1"/>
</dbReference>
<dbReference type="FunFam" id="3.40.1090.10:FF:000016">
    <property type="entry name" value="Patatin like phospholipase domain containing 1"/>
    <property type="match status" value="1"/>
</dbReference>
<dbReference type="Gene3D" id="3.40.1090.10">
    <property type="entry name" value="Cytosolic phospholipase A2 catalytic domain"/>
    <property type="match status" value="1"/>
</dbReference>
<dbReference type="InterPro" id="IPR016035">
    <property type="entry name" value="Acyl_Trfase/lysoPLipase"/>
</dbReference>
<dbReference type="InterPro" id="IPR033562">
    <property type="entry name" value="PLPL"/>
</dbReference>
<dbReference type="InterPro" id="IPR002641">
    <property type="entry name" value="PNPLA_dom"/>
</dbReference>
<dbReference type="PANTHER" id="PTHR12406">
    <property type="entry name" value="CALCIUM-INDEPENDENT PHOSPHOLIPASE A2 IPLA2 -RELATED"/>
    <property type="match status" value="1"/>
</dbReference>
<dbReference type="PANTHER" id="PTHR12406:SF23">
    <property type="entry name" value="OMEGA-HYDROXYCERAMIDE TRANSACYLASE"/>
    <property type="match status" value="1"/>
</dbReference>
<dbReference type="Pfam" id="PF01734">
    <property type="entry name" value="Patatin"/>
    <property type="match status" value="1"/>
</dbReference>
<dbReference type="SUPFAM" id="SSF52151">
    <property type="entry name" value="FabD/lysophospholipase-like"/>
    <property type="match status" value="1"/>
</dbReference>
<dbReference type="PROSITE" id="PS51635">
    <property type="entry name" value="PNPLA"/>
    <property type="match status" value="1"/>
</dbReference>
<accession>Q3V1D5</accession>
<proteinExistence type="evidence at protein level"/>
<feature type="chain" id="PRO_0000292020" description="Omega-hydroxyceramide transacylase">
    <location>
        <begin position="1"/>
        <end position="599"/>
    </location>
</feature>
<feature type="domain" description="PNPLA" evidence="2">
    <location>
        <begin position="16"/>
        <end position="185"/>
    </location>
</feature>
<feature type="region of interest" description="Disordered" evidence="3">
    <location>
        <begin position="289"/>
        <end position="563"/>
    </location>
</feature>
<feature type="short sequence motif" description="GXSXG" evidence="2">
    <location>
        <begin position="51"/>
        <end position="55"/>
    </location>
</feature>
<feature type="short sequence motif" description="DGA/G" evidence="2">
    <location>
        <begin position="172"/>
        <end position="174"/>
    </location>
</feature>
<feature type="compositionally biased region" description="Polar residues" evidence="3">
    <location>
        <begin position="325"/>
        <end position="335"/>
    </location>
</feature>
<feature type="compositionally biased region" description="Polar residues" evidence="3">
    <location>
        <begin position="350"/>
        <end position="362"/>
    </location>
</feature>
<feature type="compositionally biased region" description="Low complexity" evidence="3">
    <location>
        <begin position="443"/>
        <end position="454"/>
    </location>
</feature>
<feature type="compositionally biased region" description="Pro residues" evidence="3">
    <location>
        <begin position="468"/>
        <end position="478"/>
    </location>
</feature>
<feature type="compositionally biased region" description="Polar residues" evidence="3">
    <location>
        <begin position="490"/>
        <end position="501"/>
    </location>
</feature>
<feature type="compositionally biased region" description="Low complexity" evidence="3">
    <location>
        <begin position="551"/>
        <end position="563"/>
    </location>
</feature>
<feature type="active site" description="Nucleophile" evidence="2">
    <location>
        <position position="53"/>
    </location>
</feature>
<feature type="active site" description="Proton acceptor" evidence="2">
    <location>
        <position position="172"/>
    </location>
</feature>
<protein>
    <recommendedName>
        <fullName evidence="7">Omega-hydroxyceramide transacylase</fullName>
        <ecNumber evidence="6 7">2.3.1.296</ecNumber>
    </recommendedName>
    <alternativeName>
        <fullName evidence="8">Patatin-like phospholipase domain-containing protein 1</fullName>
    </alternativeName>
</protein>
<evidence type="ECO:0000250" key="1">
    <source>
        <dbReference type="UniProtKB" id="Q8N8W4"/>
    </source>
</evidence>
<evidence type="ECO:0000255" key="2">
    <source>
        <dbReference type="PROSITE-ProRule" id="PRU01161"/>
    </source>
</evidence>
<evidence type="ECO:0000256" key="3">
    <source>
        <dbReference type="SAM" id="MobiDB-lite"/>
    </source>
</evidence>
<evidence type="ECO:0000269" key="4">
    <source>
    </source>
</evidence>
<evidence type="ECO:0000269" key="5">
    <source>
    </source>
</evidence>
<evidence type="ECO:0000305" key="6">
    <source>
    </source>
</evidence>
<evidence type="ECO:0000305" key="7">
    <source>
    </source>
</evidence>
<evidence type="ECO:0000312" key="8">
    <source>
        <dbReference type="MGI" id="MGI:3617850"/>
    </source>
</evidence>
<name>PLPL1_MOUSE</name>
<reference key="1">
    <citation type="journal article" date="2005" name="Science">
        <title>The transcriptional landscape of the mammalian genome.</title>
        <authorList>
            <person name="Carninci P."/>
            <person name="Kasukawa T."/>
            <person name="Katayama S."/>
            <person name="Gough J."/>
            <person name="Frith M.C."/>
            <person name="Maeda N."/>
            <person name="Oyama R."/>
            <person name="Ravasi T."/>
            <person name="Lenhard B."/>
            <person name="Wells C."/>
            <person name="Kodzius R."/>
            <person name="Shimokawa K."/>
            <person name="Bajic V.B."/>
            <person name="Brenner S.E."/>
            <person name="Batalov S."/>
            <person name="Forrest A.R."/>
            <person name="Zavolan M."/>
            <person name="Davis M.J."/>
            <person name="Wilming L.G."/>
            <person name="Aidinis V."/>
            <person name="Allen J.E."/>
            <person name="Ambesi-Impiombato A."/>
            <person name="Apweiler R."/>
            <person name="Aturaliya R.N."/>
            <person name="Bailey T.L."/>
            <person name="Bansal M."/>
            <person name="Baxter L."/>
            <person name="Beisel K.W."/>
            <person name="Bersano T."/>
            <person name="Bono H."/>
            <person name="Chalk A.M."/>
            <person name="Chiu K.P."/>
            <person name="Choudhary V."/>
            <person name="Christoffels A."/>
            <person name="Clutterbuck D.R."/>
            <person name="Crowe M.L."/>
            <person name="Dalla E."/>
            <person name="Dalrymple B.P."/>
            <person name="de Bono B."/>
            <person name="Della Gatta G."/>
            <person name="di Bernardo D."/>
            <person name="Down T."/>
            <person name="Engstrom P."/>
            <person name="Fagiolini M."/>
            <person name="Faulkner G."/>
            <person name="Fletcher C.F."/>
            <person name="Fukushima T."/>
            <person name="Furuno M."/>
            <person name="Futaki S."/>
            <person name="Gariboldi M."/>
            <person name="Georgii-Hemming P."/>
            <person name="Gingeras T.R."/>
            <person name="Gojobori T."/>
            <person name="Green R.E."/>
            <person name="Gustincich S."/>
            <person name="Harbers M."/>
            <person name="Hayashi Y."/>
            <person name="Hensch T.K."/>
            <person name="Hirokawa N."/>
            <person name="Hill D."/>
            <person name="Huminiecki L."/>
            <person name="Iacono M."/>
            <person name="Ikeo K."/>
            <person name="Iwama A."/>
            <person name="Ishikawa T."/>
            <person name="Jakt M."/>
            <person name="Kanapin A."/>
            <person name="Katoh M."/>
            <person name="Kawasawa Y."/>
            <person name="Kelso J."/>
            <person name="Kitamura H."/>
            <person name="Kitano H."/>
            <person name="Kollias G."/>
            <person name="Krishnan S.P."/>
            <person name="Kruger A."/>
            <person name="Kummerfeld S.K."/>
            <person name="Kurochkin I.V."/>
            <person name="Lareau L.F."/>
            <person name="Lazarevic D."/>
            <person name="Lipovich L."/>
            <person name="Liu J."/>
            <person name="Liuni S."/>
            <person name="McWilliam S."/>
            <person name="Madan Babu M."/>
            <person name="Madera M."/>
            <person name="Marchionni L."/>
            <person name="Matsuda H."/>
            <person name="Matsuzawa S."/>
            <person name="Miki H."/>
            <person name="Mignone F."/>
            <person name="Miyake S."/>
            <person name="Morris K."/>
            <person name="Mottagui-Tabar S."/>
            <person name="Mulder N."/>
            <person name="Nakano N."/>
            <person name="Nakauchi H."/>
            <person name="Ng P."/>
            <person name="Nilsson R."/>
            <person name="Nishiguchi S."/>
            <person name="Nishikawa S."/>
            <person name="Nori F."/>
            <person name="Ohara O."/>
            <person name="Okazaki Y."/>
            <person name="Orlando V."/>
            <person name="Pang K.C."/>
            <person name="Pavan W.J."/>
            <person name="Pavesi G."/>
            <person name="Pesole G."/>
            <person name="Petrovsky N."/>
            <person name="Piazza S."/>
            <person name="Reed J."/>
            <person name="Reid J.F."/>
            <person name="Ring B.Z."/>
            <person name="Ringwald M."/>
            <person name="Rost B."/>
            <person name="Ruan Y."/>
            <person name="Salzberg S.L."/>
            <person name="Sandelin A."/>
            <person name="Schneider C."/>
            <person name="Schoenbach C."/>
            <person name="Sekiguchi K."/>
            <person name="Semple C.A."/>
            <person name="Seno S."/>
            <person name="Sessa L."/>
            <person name="Sheng Y."/>
            <person name="Shibata Y."/>
            <person name="Shimada H."/>
            <person name="Shimada K."/>
            <person name="Silva D."/>
            <person name="Sinclair B."/>
            <person name="Sperling S."/>
            <person name="Stupka E."/>
            <person name="Sugiura K."/>
            <person name="Sultana R."/>
            <person name="Takenaka Y."/>
            <person name="Taki K."/>
            <person name="Tammoja K."/>
            <person name="Tan S.L."/>
            <person name="Tang S."/>
            <person name="Taylor M.S."/>
            <person name="Tegner J."/>
            <person name="Teichmann S.A."/>
            <person name="Ueda H.R."/>
            <person name="van Nimwegen E."/>
            <person name="Verardo R."/>
            <person name="Wei C.L."/>
            <person name="Yagi K."/>
            <person name="Yamanishi H."/>
            <person name="Zabarovsky E."/>
            <person name="Zhu S."/>
            <person name="Zimmer A."/>
            <person name="Hide W."/>
            <person name="Bult C."/>
            <person name="Grimmond S.M."/>
            <person name="Teasdale R.D."/>
            <person name="Liu E.T."/>
            <person name="Brusic V."/>
            <person name="Quackenbush J."/>
            <person name="Wahlestedt C."/>
            <person name="Mattick J.S."/>
            <person name="Hume D.A."/>
            <person name="Kai C."/>
            <person name="Sasaki D."/>
            <person name="Tomaru Y."/>
            <person name="Fukuda S."/>
            <person name="Kanamori-Katayama M."/>
            <person name="Suzuki M."/>
            <person name="Aoki J."/>
            <person name="Arakawa T."/>
            <person name="Iida J."/>
            <person name="Imamura K."/>
            <person name="Itoh M."/>
            <person name="Kato T."/>
            <person name="Kawaji H."/>
            <person name="Kawagashira N."/>
            <person name="Kawashima T."/>
            <person name="Kojima M."/>
            <person name="Kondo S."/>
            <person name="Konno H."/>
            <person name="Nakano K."/>
            <person name="Ninomiya N."/>
            <person name="Nishio T."/>
            <person name="Okada M."/>
            <person name="Plessy C."/>
            <person name="Shibata K."/>
            <person name="Shiraki T."/>
            <person name="Suzuki S."/>
            <person name="Tagami M."/>
            <person name="Waki K."/>
            <person name="Watahiki A."/>
            <person name="Okamura-Oho Y."/>
            <person name="Suzuki H."/>
            <person name="Kawai J."/>
            <person name="Hayashizaki Y."/>
        </authorList>
    </citation>
    <scope>NUCLEOTIDE SEQUENCE [LARGE SCALE MRNA]</scope>
    <source>
        <strain>C57BL/6J</strain>
        <tissue>Skin</tissue>
    </source>
</reference>
<reference key="2">
    <citation type="journal article" date="2017" name="J. Invest. Dermatol.">
        <title>PNPLA1 Deficiency in Mice and Humans Leads to a Defect in the Synthesis of Omega-O-Acylceramides.</title>
        <authorList>
            <person name="Grond S."/>
            <person name="Eichmann T.O."/>
            <person name="Dubrac S."/>
            <person name="Kolb D."/>
            <person name="Schmuth M."/>
            <person name="Fischer J."/>
            <person name="Crumrine D."/>
            <person name="Elias P.M."/>
            <person name="Haemmerle G."/>
            <person name="Zechner R."/>
            <person name="Lass A."/>
            <person name="Radner F.P.W."/>
        </authorList>
    </citation>
    <scope>FUNCTION</scope>
    <scope>CATALYTIC ACTIVITY</scope>
    <scope>TISSUE SPECIFICITY</scope>
    <scope>DISRUPTION PHENOTYPE</scope>
</reference>
<reference key="3">
    <citation type="journal article" date="2017" name="Nat. Commun.">
        <title>PNPLA1 has a crucial role in skin barrier function by directing acylceramide biosynthesis.</title>
        <authorList>
            <person name="Hirabayashi T."/>
            <person name="Anjo T."/>
            <person name="Kaneko A."/>
            <person name="Senoo Y."/>
            <person name="Shibata A."/>
            <person name="Takama H."/>
            <person name="Yokoyama K."/>
            <person name="Nishito Y."/>
            <person name="Ono T."/>
            <person name="Taya C."/>
            <person name="Muramatsu K."/>
            <person name="Fukami K."/>
            <person name="Munoz-Garcia A."/>
            <person name="Brash A.R."/>
            <person name="Ikeda K."/>
            <person name="Arita M."/>
            <person name="Akiyama M."/>
            <person name="Murakami M."/>
        </authorList>
    </citation>
    <scope>FUNCTION</scope>
    <scope>CATALYTIC ACTIVITY</scope>
    <scope>TISSUE SPECIFICITY</scope>
    <scope>INDUCTION</scope>
    <scope>DISRUPTION PHENOTYPE</scope>
</reference>